<evidence type="ECO:0000255" key="1">
    <source>
        <dbReference type="HAMAP-Rule" id="MF_01395"/>
    </source>
</evidence>
<evidence type="ECO:0000255" key="2">
    <source>
        <dbReference type="PROSITE-ProRule" id="PRU01136"/>
    </source>
</evidence>
<feature type="chain" id="PRO_0000389785" description="Acetyl-coenzyme A carboxylase carboxyl transferase subunit beta">
    <location>
        <begin position="1"/>
        <end position="294"/>
    </location>
</feature>
<feature type="domain" description="CoA carboxyltransferase N-terminal" evidence="2">
    <location>
        <begin position="30"/>
        <end position="294"/>
    </location>
</feature>
<feature type="zinc finger region" description="C4-type" evidence="1">
    <location>
        <begin position="34"/>
        <end position="56"/>
    </location>
</feature>
<feature type="binding site" evidence="1">
    <location>
        <position position="34"/>
    </location>
    <ligand>
        <name>Zn(2+)</name>
        <dbReference type="ChEBI" id="CHEBI:29105"/>
    </ligand>
</feature>
<feature type="binding site" evidence="1">
    <location>
        <position position="37"/>
    </location>
    <ligand>
        <name>Zn(2+)</name>
        <dbReference type="ChEBI" id="CHEBI:29105"/>
    </ligand>
</feature>
<feature type="binding site" evidence="1">
    <location>
        <position position="53"/>
    </location>
    <ligand>
        <name>Zn(2+)</name>
        <dbReference type="ChEBI" id="CHEBI:29105"/>
    </ligand>
</feature>
<feature type="binding site" evidence="1">
    <location>
        <position position="56"/>
    </location>
    <ligand>
        <name>Zn(2+)</name>
        <dbReference type="ChEBI" id="CHEBI:29105"/>
    </ligand>
</feature>
<keyword id="KW-0067">ATP-binding</keyword>
<keyword id="KW-0963">Cytoplasm</keyword>
<keyword id="KW-0275">Fatty acid biosynthesis</keyword>
<keyword id="KW-0276">Fatty acid metabolism</keyword>
<keyword id="KW-0444">Lipid biosynthesis</keyword>
<keyword id="KW-0443">Lipid metabolism</keyword>
<keyword id="KW-0479">Metal-binding</keyword>
<keyword id="KW-0547">Nucleotide-binding</keyword>
<keyword id="KW-0808">Transferase</keyword>
<keyword id="KW-0862">Zinc</keyword>
<keyword id="KW-0863">Zinc-finger</keyword>
<proteinExistence type="inferred from homology"/>
<sequence length="294" mass="32200">MLGDLFTKPKKRKYATIPSDGTKADVPEGIMTKCPECKKIMYTKELQKNLMVCNYCGFHHPIGAKARIDMLVDEGSFEEIDASLTTANPLGFEDYMDRIEKDKQKSGLNEAIVTGHATIDGNPLVIAVMDSRFRMASMGSVVGEKIFRAVEDADKTNKPFVIFTASGGARMQEGMLSLMQMAKTSAAFKRFSNHGGLIITVMTHPTTGGVSASFASLGDYNFAEPGALIGFAGRRVIEQTVREELPEDFQTSEFLLKHGQLDDCISRLDLQNKLSFILSIHVKTPEVGGEADGE</sequence>
<comment type="function">
    <text evidence="1">Component of the acetyl coenzyme A carboxylase (ACC) complex. Biotin carboxylase (BC) catalyzes the carboxylation of biotin on its carrier protein (BCCP) and then the CO(2) group is transferred by the transcarboxylase to acetyl-CoA to form malonyl-CoA.</text>
</comment>
<comment type="catalytic activity">
    <reaction evidence="1">
        <text>N(6)-carboxybiotinyl-L-lysyl-[protein] + acetyl-CoA = N(6)-biotinyl-L-lysyl-[protein] + malonyl-CoA</text>
        <dbReference type="Rhea" id="RHEA:54728"/>
        <dbReference type="Rhea" id="RHEA-COMP:10505"/>
        <dbReference type="Rhea" id="RHEA-COMP:10506"/>
        <dbReference type="ChEBI" id="CHEBI:57288"/>
        <dbReference type="ChEBI" id="CHEBI:57384"/>
        <dbReference type="ChEBI" id="CHEBI:83144"/>
        <dbReference type="ChEBI" id="CHEBI:83145"/>
        <dbReference type="EC" id="2.1.3.15"/>
    </reaction>
</comment>
<comment type="cofactor">
    <cofactor evidence="1">
        <name>Zn(2+)</name>
        <dbReference type="ChEBI" id="CHEBI:29105"/>
    </cofactor>
    <text evidence="1">Binds 1 zinc ion per subunit.</text>
</comment>
<comment type="pathway">
    <text evidence="1">Lipid metabolism; malonyl-CoA biosynthesis; malonyl-CoA from acetyl-CoA: step 1/1.</text>
</comment>
<comment type="subunit">
    <text evidence="1">Acetyl-CoA carboxylase is a heterohexamer composed of biotin carboxyl carrier protein (AccB), biotin carboxylase (AccC) and two subunits each of ACCase subunit alpha (AccA) and ACCase subunit beta (AccD).</text>
</comment>
<comment type="subcellular location">
    <subcellularLocation>
        <location evidence="1">Cytoplasm</location>
    </subcellularLocation>
</comment>
<comment type="similarity">
    <text evidence="1">Belongs to the AccD/PCCB family.</text>
</comment>
<accession>Q71Z94</accession>
<gene>
    <name evidence="1" type="primary">accD</name>
    <name type="ordered locus">LMOf2365_1595</name>
</gene>
<reference key="1">
    <citation type="journal article" date="2004" name="Nucleic Acids Res.">
        <title>Whole genome comparisons of serotype 4b and 1/2a strains of the food-borne pathogen Listeria monocytogenes reveal new insights into the core genome components of this species.</title>
        <authorList>
            <person name="Nelson K.E."/>
            <person name="Fouts D.E."/>
            <person name="Mongodin E.F."/>
            <person name="Ravel J."/>
            <person name="DeBoy R.T."/>
            <person name="Kolonay J.F."/>
            <person name="Rasko D.A."/>
            <person name="Angiuoli S.V."/>
            <person name="Gill S.R."/>
            <person name="Paulsen I.T."/>
            <person name="Peterson J.D."/>
            <person name="White O."/>
            <person name="Nelson W.C."/>
            <person name="Nierman W.C."/>
            <person name="Beanan M.J."/>
            <person name="Brinkac L.M."/>
            <person name="Daugherty S.C."/>
            <person name="Dodson R.J."/>
            <person name="Durkin A.S."/>
            <person name="Madupu R."/>
            <person name="Haft D.H."/>
            <person name="Selengut J."/>
            <person name="Van Aken S.E."/>
            <person name="Khouri H.M."/>
            <person name="Fedorova N."/>
            <person name="Forberger H.A."/>
            <person name="Tran B."/>
            <person name="Kathariou S."/>
            <person name="Wonderling L.D."/>
            <person name="Uhlich G.A."/>
            <person name="Bayles D.O."/>
            <person name="Luchansky J.B."/>
            <person name="Fraser C.M."/>
        </authorList>
    </citation>
    <scope>NUCLEOTIDE SEQUENCE [LARGE SCALE GENOMIC DNA]</scope>
    <source>
        <strain>F2365</strain>
    </source>
</reference>
<protein>
    <recommendedName>
        <fullName evidence="1">Acetyl-coenzyme A carboxylase carboxyl transferase subunit beta</fullName>
        <shortName evidence="1">ACCase subunit beta</shortName>
        <shortName evidence="1">Acetyl-CoA carboxylase carboxyltransferase subunit beta</shortName>
        <ecNumber evidence="1">2.1.3.15</ecNumber>
    </recommendedName>
</protein>
<name>ACCD_LISMF</name>
<dbReference type="EC" id="2.1.3.15" evidence="1"/>
<dbReference type="EMBL" id="AE017262">
    <property type="protein sequence ID" value="AAT04370.1"/>
    <property type="molecule type" value="Genomic_DNA"/>
</dbReference>
<dbReference type="RefSeq" id="WP_003727383.1">
    <property type="nucleotide sequence ID" value="NC_002973.6"/>
</dbReference>
<dbReference type="SMR" id="Q71Z94"/>
<dbReference type="KEGG" id="lmf:LMOf2365_1595"/>
<dbReference type="HOGENOM" id="CLU_015486_1_1_9"/>
<dbReference type="UniPathway" id="UPA00655">
    <property type="reaction ID" value="UER00711"/>
</dbReference>
<dbReference type="GO" id="GO:0009317">
    <property type="term" value="C:acetyl-CoA carboxylase complex"/>
    <property type="evidence" value="ECO:0007669"/>
    <property type="project" value="InterPro"/>
</dbReference>
<dbReference type="GO" id="GO:0003989">
    <property type="term" value="F:acetyl-CoA carboxylase activity"/>
    <property type="evidence" value="ECO:0007669"/>
    <property type="project" value="InterPro"/>
</dbReference>
<dbReference type="GO" id="GO:0005524">
    <property type="term" value="F:ATP binding"/>
    <property type="evidence" value="ECO:0007669"/>
    <property type="project" value="UniProtKB-KW"/>
</dbReference>
<dbReference type="GO" id="GO:0016743">
    <property type="term" value="F:carboxyl- or carbamoyltransferase activity"/>
    <property type="evidence" value="ECO:0007669"/>
    <property type="project" value="UniProtKB-UniRule"/>
</dbReference>
<dbReference type="GO" id="GO:0008270">
    <property type="term" value="F:zinc ion binding"/>
    <property type="evidence" value="ECO:0007669"/>
    <property type="project" value="UniProtKB-UniRule"/>
</dbReference>
<dbReference type="GO" id="GO:0006633">
    <property type="term" value="P:fatty acid biosynthetic process"/>
    <property type="evidence" value="ECO:0007669"/>
    <property type="project" value="UniProtKB-KW"/>
</dbReference>
<dbReference type="GO" id="GO:2001295">
    <property type="term" value="P:malonyl-CoA biosynthetic process"/>
    <property type="evidence" value="ECO:0007669"/>
    <property type="project" value="UniProtKB-UniRule"/>
</dbReference>
<dbReference type="Gene3D" id="3.90.226.10">
    <property type="entry name" value="2-enoyl-CoA Hydratase, Chain A, domain 1"/>
    <property type="match status" value="1"/>
</dbReference>
<dbReference type="HAMAP" id="MF_01395">
    <property type="entry name" value="AcetylCoA_CT_beta"/>
    <property type="match status" value="1"/>
</dbReference>
<dbReference type="InterPro" id="IPR034733">
    <property type="entry name" value="AcCoA_carboxyl_beta"/>
</dbReference>
<dbReference type="InterPro" id="IPR000438">
    <property type="entry name" value="Acetyl_CoA_COase_Trfase_b_su"/>
</dbReference>
<dbReference type="InterPro" id="IPR029045">
    <property type="entry name" value="ClpP/crotonase-like_dom_sf"/>
</dbReference>
<dbReference type="InterPro" id="IPR011762">
    <property type="entry name" value="COA_CT_N"/>
</dbReference>
<dbReference type="InterPro" id="IPR041010">
    <property type="entry name" value="Znf-ACC"/>
</dbReference>
<dbReference type="NCBIfam" id="TIGR00515">
    <property type="entry name" value="accD"/>
    <property type="match status" value="1"/>
</dbReference>
<dbReference type="PANTHER" id="PTHR42995">
    <property type="entry name" value="ACETYL-COENZYME A CARBOXYLASE CARBOXYL TRANSFERASE SUBUNIT BETA, CHLOROPLASTIC"/>
    <property type="match status" value="1"/>
</dbReference>
<dbReference type="PANTHER" id="PTHR42995:SF5">
    <property type="entry name" value="ACETYL-COENZYME A CARBOXYLASE CARBOXYL TRANSFERASE SUBUNIT BETA, CHLOROPLASTIC"/>
    <property type="match status" value="1"/>
</dbReference>
<dbReference type="Pfam" id="PF01039">
    <property type="entry name" value="Carboxyl_trans"/>
    <property type="match status" value="1"/>
</dbReference>
<dbReference type="Pfam" id="PF17848">
    <property type="entry name" value="Zn_ribbon_ACC"/>
    <property type="match status" value="1"/>
</dbReference>
<dbReference type="PRINTS" id="PR01070">
    <property type="entry name" value="ACCCTRFRASEB"/>
</dbReference>
<dbReference type="SUPFAM" id="SSF52096">
    <property type="entry name" value="ClpP/crotonase"/>
    <property type="match status" value="1"/>
</dbReference>
<dbReference type="PROSITE" id="PS50980">
    <property type="entry name" value="COA_CT_NTER"/>
    <property type="match status" value="1"/>
</dbReference>
<organism>
    <name type="scientific">Listeria monocytogenes serotype 4b (strain F2365)</name>
    <dbReference type="NCBI Taxonomy" id="265669"/>
    <lineage>
        <taxon>Bacteria</taxon>
        <taxon>Bacillati</taxon>
        <taxon>Bacillota</taxon>
        <taxon>Bacilli</taxon>
        <taxon>Bacillales</taxon>
        <taxon>Listeriaceae</taxon>
        <taxon>Listeria</taxon>
    </lineage>
</organism>